<dbReference type="EC" id="5.1.1.7" evidence="1"/>
<dbReference type="EMBL" id="CP000247">
    <property type="protein sequence ID" value="ABG71963.1"/>
    <property type="molecule type" value="Genomic_DNA"/>
</dbReference>
<dbReference type="RefSeq" id="WP_001160654.1">
    <property type="nucleotide sequence ID" value="NC_008253.1"/>
</dbReference>
<dbReference type="SMR" id="Q0TAR6"/>
<dbReference type="GeneID" id="93778134"/>
<dbReference type="KEGG" id="ecp:ECP_4003"/>
<dbReference type="HOGENOM" id="CLU_053306_1_1_6"/>
<dbReference type="UniPathway" id="UPA00034">
    <property type="reaction ID" value="UER00025"/>
</dbReference>
<dbReference type="Proteomes" id="UP000009182">
    <property type="component" value="Chromosome"/>
</dbReference>
<dbReference type="GO" id="GO:0005829">
    <property type="term" value="C:cytosol"/>
    <property type="evidence" value="ECO:0007669"/>
    <property type="project" value="TreeGrafter"/>
</dbReference>
<dbReference type="GO" id="GO:0008837">
    <property type="term" value="F:diaminopimelate epimerase activity"/>
    <property type="evidence" value="ECO:0007669"/>
    <property type="project" value="UniProtKB-UniRule"/>
</dbReference>
<dbReference type="GO" id="GO:0009089">
    <property type="term" value="P:lysine biosynthetic process via diaminopimelate"/>
    <property type="evidence" value="ECO:0007669"/>
    <property type="project" value="UniProtKB-UniRule"/>
</dbReference>
<dbReference type="FunFam" id="3.10.310.10:FF:000001">
    <property type="entry name" value="Diaminopimelate epimerase"/>
    <property type="match status" value="1"/>
</dbReference>
<dbReference type="FunFam" id="3.10.310.10:FF:000002">
    <property type="entry name" value="Diaminopimelate epimerase"/>
    <property type="match status" value="1"/>
</dbReference>
<dbReference type="Gene3D" id="3.10.310.10">
    <property type="entry name" value="Diaminopimelate Epimerase, Chain A, domain 1"/>
    <property type="match status" value="2"/>
</dbReference>
<dbReference type="HAMAP" id="MF_00197">
    <property type="entry name" value="DAP_epimerase"/>
    <property type="match status" value="1"/>
</dbReference>
<dbReference type="InterPro" id="IPR018510">
    <property type="entry name" value="DAP_epimerase_AS"/>
</dbReference>
<dbReference type="InterPro" id="IPR001653">
    <property type="entry name" value="DAP_epimerase_DapF"/>
</dbReference>
<dbReference type="NCBIfam" id="TIGR00652">
    <property type="entry name" value="DapF"/>
    <property type="match status" value="1"/>
</dbReference>
<dbReference type="PANTHER" id="PTHR31689:SF0">
    <property type="entry name" value="DIAMINOPIMELATE EPIMERASE"/>
    <property type="match status" value="1"/>
</dbReference>
<dbReference type="PANTHER" id="PTHR31689">
    <property type="entry name" value="DIAMINOPIMELATE EPIMERASE, CHLOROPLASTIC"/>
    <property type="match status" value="1"/>
</dbReference>
<dbReference type="Pfam" id="PF01678">
    <property type="entry name" value="DAP_epimerase"/>
    <property type="match status" value="2"/>
</dbReference>
<dbReference type="SUPFAM" id="SSF54506">
    <property type="entry name" value="Diaminopimelate epimerase-like"/>
    <property type="match status" value="1"/>
</dbReference>
<dbReference type="PROSITE" id="PS01326">
    <property type="entry name" value="DAP_EPIMERASE"/>
    <property type="match status" value="1"/>
</dbReference>
<reference key="1">
    <citation type="journal article" date="2006" name="Mol. Microbiol.">
        <title>Role of pathogenicity island-associated integrases in the genome plasticity of uropathogenic Escherichia coli strain 536.</title>
        <authorList>
            <person name="Hochhut B."/>
            <person name="Wilde C."/>
            <person name="Balling G."/>
            <person name="Middendorf B."/>
            <person name="Dobrindt U."/>
            <person name="Brzuszkiewicz E."/>
            <person name="Gottschalk G."/>
            <person name="Carniel E."/>
            <person name="Hacker J."/>
        </authorList>
    </citation>
    <scope>NUCLEOTIDE SEQUENCE [LARGE SCALE GENOMIC DNA]</scope>
    <source>
        <strain>536 / UPEC</strain>
    </source>
</reference>
<keyword id="KW-0028">Amino-acid biosynthesis</keyword>
<keyword id="KW-0963">Cytoplasm</keyword>
<keyword id="KW-0413">Isomerase</keyword>
<keyword id="KW-0457">Lysine biosynthesis</keyword>
<protein>
    <recommendedName>
        <fullName evidence="1">Diaminopimelate epimerase</fullName>
        <shortName evidence="1">DAP epimerase</shortName>
        <ecNumber evidence="1">5.1.1.7</ecNumber>
    </recommendedName>
    <alternativeName>
        <fullName evidence="1">PLP-independent amino acid racemase</fullName>
    </alternativeName>
</protein>
<name>DAPF_ECOL5</name>
<comment type="function">
    <text evidence="1">Catalyzes the stereoinversion of LL-2,6-diaminopimelate (L,L-DAP) to meso-diaminopimelate (meso-DAP), a precursor of L-lysine and an essential component of the bacterial peptidoglycan.</text>
</comment>
<comment type="catalytic activity">
    <reaction evidence="1">
        <text>(2S,6S)-2,6-diaminopimelate = meso-2,6-diaminopimelate</text>
        <dbReference type="Rhea" id="RHEA:15393"/>
        <dbReference type="ChEBI" id="CHEBI:57609"/>
        <dbReference type="ChEBI" id="CHEBI:57791"/>
        <dbReference type="EC" id="5.1.1.7"/>
    </reaction>
</comment>
<comment type="pathway">
    <text evidence="1">Amino-acid biosynthesis; L-lysine biosynthesis via DAP pathway; DL-2,6-diaminopimelate from LL-2,6-diaminopimelate: step 1/1.</text>
</comment>
<comment type="subunit">
    <text evidence="1">Homodimer.</text>
</comment>
<comment type="subcellular location">
    <subcellularLocation>
        <location evidence="1">Cytoplasm</location>
    </subcellularLocation>
</comment>
<comment type="similarity">
    <text evidence="1">Belongs to the diaminopimelate epimerase family.</text>
</comment>
<organism>
    <name type="scientific">Escherichia coli O6:K15:H31 (strain 536 / UPEC)</name>
    <dbReference type="NCBI Taxonomy" id="362663"/>
    <lineage>
        <taxon>Bacteria</taxon>
        <taxon>Pseudomonadati</taxon>
        <taxon>Pseudomonadota</taxon>
        <taxon>Gammaproteobacteria</taxon>
        <taxon>Enterobacterales</taxon>
        <taxon>Enterobacteriaceae</taxon>
        <taxon>Escherichia</taxon>
    </lineage>
</organism>
<accession>Q0TAR6</accession>
<sequence length="274" mass="30209">MQFSKMHGLGNDFMVVDAVTQNVFFSPELIRRLADRHLGVGFDQLLVVEPPYDPELDFHYRIFNADGSEVAQCGNGARCFARFVRLKGLTNKRDIRVSTANGRMVLTVTDDDLVRVNMGEPNFEPSAVPFRANKAEKTYIMRAAEQTILCGVVSMGNPHCVIQVDDVDTAAVETLGPVLESHERFPERANIGFMQVVKREHIRLRVYERGAGETQACGSGACAAVAVGIQQGLLAEEVRVELPGGRLDIAWKGPGHPLYMTGPAVHVYDGFIHL</sequence>
<evidence type="ECO:0000255" key="1">
    <source>
        <dbReference type="HAMAP-Rule" id="MF_00197"/>
    </source>
</evidence>
<feature type="chain" id="PRO_1000011875" description="Diaminopimelate epimerase">
    <location>
        <begin position="1"/>
        <end position="274"/>
    </location>
</feature>
<feature type="active site" description="Proton donor" evidence="1">
    <location>
        <position position="73"/>
    </location>
</feature>
<feature type="active site" description="Proton acceptor" evidence="1">
    <location>
        <position position="217"/>
    </location>
</feature>
<feature type="binding site" evidence="1">
    <location>
        <position position="11"/>
    </location>
    <ligand>
        <name>substrate</name>
    </ligand>
</feature>
<feature type="binding site" evidence="1">
    <location>
        <position position="44"/>
    </location>
    <ligand>
        <name>substrate</name>
    </ligand>
</feature>
<feature type="binding site" evidence="1">
    <location>
        <position position="64"/>
    </location>
    <ligand>
        <name>substrate</name>
    </ligand>
</feature>
<feature type="binding site" evidence="1">
    <location>
        <begin position="74"/>
        <end position="75"/>
    </location>
    <ligand>
        <name>substrate</name>
    </ligand>
</feature>
<feature type="binding site" evidence="1">
    <location>
        <position position="157"/>
    </location>
    <ligand>
        <name>substrate</name>
    </ligand>
</feature>
<feature type="binding site" evidence="1">
    <location>
        <position position="190"/>
    </location>
    <ligand>
        <name>substrate</name>
    </ligand>
</feature>
<feature type="binding site" evidence="1">
    <location>
        <begin position="208"/>
        <end position="209"/>
    </location>
    <ligand>
        <name>substrate</name>
    </ligand>
</feature>
<feature type="binding site" evidence="1">
    <location>
        <begin position="218"/>
        <end position="219"/>
    </location>
    <ligand>
        <name>substrate</name>
    </ligand>
</feature>
<feature type="site" description="Could be important to modulate the pK values of the two catalytic cysteine residues" evidence="1">
    <location>
        <position position="159"/>
    </location>
</feature>
<feature type="site" description="Could be important to modulate the pK values of the two catalytic cysteine residues" evidence="1">
    <location>
        <position position="208"/>
    </location>
</feature>
<feature type="site" description="Important for dimerization" evidence="1">
    <location>
        <position position="268"/>
    </location>
</feature>
<gene>
    <name evidence="1" type="primary">dapF</name>
    <name type="ordered locus">ECP_4003</name>
</gene>
<proteinExistence type="inferred from homology"/>